<evidence type="ECO:0000255" key="1">
    <source>
        <dbReference type="HAMAP-Rule" id="MF_00017"/>
    </source>
</evidence>
<evidence type="ECO:0000305" key="2"/>
<gene>
    <name evidence="1" type="primary">recR</name>
    <name type="ordered locus">M6_Spy1186</name>
</gene>
<protein>
    <recommendedName>
        <fullName evidence="1">Recombination protein RecR</fullName>
    </recommendedName>
</protein>
<feature type="chain" id="PRO_0000190402" description="Recombination protein RecR">
    <location>
        <begin position="1"/>
        <end position="198"/>
    </location>
</feature>
<feature type="domain" description="Toprim" evidence="1">
    <location>
        <begin position="80"/>
        <end position="175"/>
    </location>
</feature>
<feature type="zinc finger region" description="C4-type" evidence="1">
    <location>
        <begin position="57"/>
        <end position="72"/>
    </location>
</feature>
<proteinExistence type="inferred from homology"/>
<reference key="1">
    <citation type="journal article" date="2004" name="J. Infect. Dis.">
        <title>Progress toward characterization of the group A Streptococcus metagenome: complete genome sequence of a macrolide-resistant serotype M6 strain.</title>
        <authorList>
            <person name="Banks D.J."/>
            <person name="Porcella S.F."/>
            <person name="Barbian K.D."/>
            <person name="Beres S.B."/>
            <person name="Philips L.E."/>
            <person name="Voyich J.M."/>
            <person name="DeLeo F.R."/>
            <person name="Martin J.M."/>
            <person name="Somerville G.A."/>
            <person name="Musser J.M."/>
        </authorList>
    </citation>
    <scope>NUCLEOTIDE SEQUENCE [LARGE SCALE GENOMIC DNA]</scope>
    <source>
        <strain>ATCC BAA-946 / MGAS10394</strain>
    </source>
</reference>
<name>RECR_STRP6</name>
<keyword id="KW-0227">DNA damage</keyword>
<keyword id="KW-0233">DNA recombination</keyword>
<keyword id="KW-0234">DNA repair</keyword>
<keyword id="KW-0479">Metal-binding</keyword>
<keyword id="KW-0862">Zinc</keyword>
<keyword id="KW-0863">Zinc-finger</keyword>
<accession>Q5XB92</accession>
<dbReference type="EMBL" id="CP000003">
    <property type="protein sequence ID" value="AAT87321.1"/>
    <property type="status" value="ALT_INIT"/>
    <property type="molecule type" value="Genomic_DNA"/>
</dbReference>
<dbReference type="RefSeq" id="WP_002983939.1">
    <property type="nucleotide sequence ID" value="NC_006086.1"/>
</dbReference>
<dbReference type="SMR" id="Q5XB92"/>
<dbReference type="GeneID" id="69900624"/>
<dbReference type="KEGG" id="spa:M6_Spy1186"/>
<dbReference type="HOGENOM" id="CLU_060739_1_0_9"/>
<dbReference type="Proteomes" id="UP000001167">
    <property type="component" value="Chromosome"/>
</dbReference>
<dbReference type="GO" id="GO:0003677">
    <property type="term" value="F:DNA binding"/>
    <property type="evidence" value="ECO:0007669"/>
    <property type="project" value="UniProtKB-UniRule"/>
</dbReference>
<dbReference type="GO" id="GO:0008270">
    <property type="term" value="F:zinc ion binding"/>
    <property type="evidence" value="ECO:0007669"/>
    <property type="project" value="UniProtKB-KW"/>
</dbReference>
<dbReference type="GO" id="GO:0006310">
    <property type="term" value="P:DNA recombination"/>
    <property type="evidence" value="ECO:0007669"/>
    <property type="project" value="UniProtKB-UniRule"/>
</dbReference>
<dbReference type="GO" id="GO:0006281">
    <property type="term" value="P:DNA repair"/>
    <property type="evidence" value="ECO:0007669"/>
    <property type="project" value="UniProtKB-UniRule"/>
</dbReference>
<dbReference type="CDD" id="cd01025">
    <property type="entry name" value="TOPRIM_recR"/>
    <property type="match status" value="1"/>
</dbReference>
<dbReference type="Gene3D" id="3.30.60.80">
    <property type="match status" value="1"/>
</dbReference>
<dbReference type="Gene3D" id="3.40.1360.10">
    <property type="match status" value="1"/>
</dbReference>
<dbReference type="Gene3D" id="6.10.250.240">
    <property type="match status" value="1"/>
</dbReference>
<dbReference type="Gene3D" id="1.10.8.420">
    <property type="entry name" value="RecR Domain 1"/>
    <property type="match status" value="1"/>
</dbReference>
<dbReference type="HAMAP" id="MF_00017">
    <property type="entry name" value="RecR"/>
    <property type="match status" value="1"/>
</dbReference>
<dbReference type="InterPro" id="IPR000093">
    <property type="entry name" value="DNA_Rcmb_RecR"/>
</dbReference>
<dbReference type="InterPro" id="IPR023627">
    <property type="entry name" value="Rcmb_RecR"/>
</dbReference>
<dbReference type="InterPro" id="IPR015967">
    <property type="entry name" value="Rcmb_RecR_Znf"/>
</dbReference>
<dbReference type="InterPro" id="IPR006171">
    <property type="entry name" value="TOPRIM_dom"/>
</dbReference>
<dbReference type="InterPro" id="IPR034137">
    <property type="entry name" value="TOPRIM_RecR"/>
</dbReference>
<dbReference type="NCBIfam" id="TIGR00615">
    <property type="entry name" value="recR"/>
    <property type="match status" value="1"/>
</dbReference>
<dbReference type="PANTHER" id="PTHR30446">
    <property type="entry name" value="RECOMBINATION PROTEIN RECR"/>
    <property type="match status" value="1"/>
</dbReference>
<dbReference type="PANTHER" id="PTHR30446:SF0">
    <property type="entry name" value="RECOMBINATION PROTEIN RECR"/>
    <property type="match status" value="1"/>
</dbReference>
<dbReference type="Pfam" id="PF21175">
    <property type="entry name" value="RecR_C"/>
    <property type="match status" value="1"/>
</dbReference>
<dbReference type="Pfam" id="PF21176">
    <property type="entry name" value="RecR_HhH"/>
    <property type="match status" value="1"/>
</dbReference>
<dbReference type="Pfam" id="PF02132">
    <property type="entry name" value="RecR_ZnF"/>
    <property type="match status" value="1"/>
</dbReference>
<dbReference type="Pfam" id="PF13662">
    <property type="entry name" value="Toprim_4"/>
    <property type="match status" value="1"/>
</dbReference>
<dbReference type="SMART" id="SM00493">
    <property type="entry name" value="TOPRIM"/>
    <property type="match status" value="1"/>
</dbReference>
<dbReference type="SUPFAM" id="SSF111304">
    <property type="entry name" value="Recombination protein RecR"/>
    <property type="match status" value="1"/>
</dbReference>
<dbReference type="PROSITE" id="PS01300">
    <property type="entry name" value="RECR"/>
    <property type="match status" value="1"/>
</dbReference>
<dbReference type="PROSITE" id="PS50880">
    <property type="entry name" value="TOPRIM"/>
    <property type="match status" value="1"/>
</dbReference>
<organism>
    <name type="scientific">Streptococcus pyogenes serotype M6 (strain ATCC BAA-946 / MGAS10394)</name>
    <dbReference type="NCBI Taxonomy" id="286636"/>
    <lineage>
        <taxon>Bacteria</taxon>
        <taxon>Bacillati</taxon>
        <taxon>Bacillota</taxon>
        <taxon>Bacilli</taxon>
        <taxon>Lactobacillales</taxon>
        <taxon>Streptococcaceae</taxon>
        <taxon>Streptococcus</taxon>
    </lineage>
</organism>
<sequence length="198" mass="21645">MLYPTPIAKLIDSYSKLPGIGIKTATRLAFYTIGMSNEDVNDFAKNLLAAKRELTYCSICGNLTDDDPCHICTDTSRDQTTILVVEDAKDVSAMEKIQEYHGYYHVLHGLISPMNGVGPDDINLKSLITRLMDGKVSEVIVATNATADGEATSMYISRVLKPAGIKVTRLARGLAVGSDIEYADEVTLLRAIENRTEL</sequence>
<comment type="function">
    <text evidence="1">May play a role in DNA repair. It seems to be involved in an RecBC-independent recombinational process of DNA repair. It may act with RecF and RecO.</text>
</comment>
<comment type="similarity">
    <text evidence="1">Belongs to the RecR family.</text>
</comment>
<comment type="sequence caution" evidence="2">
    <conflict type="erroneous initiation">
        <sequence resource="EMBL-CDS" id="AAT87321"/>
    </conflict>
</comment>